<accession>B1YGV7</accession>
<sequence length="145" mass="16419">MLLPKRVKYRRVHRGNMRGKAKRGTTVHFGEFGIQAQEASWITSRQIESARIAMTRYMKRGGKVWIKIFPHKPYTKKPLEVRMGSGKGAPEGWVAVVKPGKVMFEIAGVSEEIAREALRLASHKLPVKCKFVKREENGGDTNESN</sequence>
<gene>
    <name evidence="1" type="primary">rplP</name>
    <name type="ordered locus">Exig_0103</name>
</gene>
<protein>
    <recommendedName>
        <fullName evidence="1">Large ribosomal subunit protein uL16</fullName>
    </recommendedName>
    <alternativeName>
        <fullName evidence="2">50S ribosomal protein L16</fullName>
    </alternativeName>
</protein>
<name>RL16_EXIS2</name>
<feature type="chain" id="PRO_1000142974" description="Large ribosomal subunit protein uL16">
    <location>
        <begin position="1"/>
        <end position="145"/>
    </location>
</feature>
<evidence type="ECO:0000255" key="1">
    <source>
        <dbReference type="HAMAP-Rule" id="MF_01342"/>
    </source>
</evidence>
<evidence type="ECO:0000305" key="2"/>
<dbReference type="EMBL" id="CP001022">
    <property type="protein sequence ID" value="ACB59590.1"/>
    <property type="molecule type" value="Genomic_DNA"/>
</dbReference>
<dbReference type="RefSeq" id="WP_012369016.1">
    <property type="nucleotide sequence ID" value="NC_010556.1"/>
</dbReference>
<dbReference type="SMR" id="B1YGV7"/>
<dbReference type="STRING" id="262543.Exig_0103"/>
<dbReference type="GeneID" id="90838851"/>
<dbReference type="KEGG" id="esi:Exig_0103"/>
<dbReference type="eggNOG" id="COG0197">
    <property type="taxonomic scope" value="Bacteria"/>
</dbReference>
<dbReference type="HOGENOM" id="CLU_078858_2_1_9"/>
<dbReference type="OrthoDB" id="9802589at2"/>
<dbReference type="Proteomes" id="UP000001681">
    <property type="component" value="Chromosome"/>
</dbReference>
<dbReference type="GO" id="GO:0022625">
    <property type="term" value="C:cytosolic large ribosomal subunit"/>
    <property type="evidence" value="ECO:0007669"/>
    <property type="project" value="TreeGrafter"/>
</dbReference>
<dbReference type="GO" id="GO:0019843">
    <property type="term" value="F:rRNA binding"/>
    <property type="evidence" value="ECO:0007669"/>
    <property type="project" value="UniProtKB-UniRule"/>
</dbReference>
<dbReference type="GO" id="GO:0003735">
    <property type="term" value="F:structural constituent of ribosome"/>
    <property type="evidence" value="ECO:0007669"/>
    <property type="project" value="InterPro"/>
</dbReference>
<dbReference type="GO" id="GO:0000049">
    <property type="term" value="F:tRNA binding"/>
    <property type="evidence" value="ECO:0007669"/>
    <property type="project" value="UniProtKB-KW"/>
</dbReference>
<dbReference type="GO" id="GO:0006412">
    <property type="term" value="P:translation"/>
    <property type="evidence" value="ECO:0007669"/>
    <property type="project" value="UniProtKB-UniRule"/>
</dbReference>
<dbReference type="CDD" id="cd01433">
    <property type="entry name" value="Ribosomal_L16_L10e"/>
    <property type="match status" value="1"/>
</dbReference>
<dbReference type="FunFam" id="3.90.1170.10:FF:000001">
    <property type="entry name" value="50S ribosomal protein L16"/>
    <property type="match status" value="1"/>
</dbReference>
<dbReference type="Gene3D" id="3.90.1170.10">
    <property type="entry name" value="Ribosomal protein L10e/L16"/>
    <property type="match status" value="1"/>
</dbReference>
<dbReference type="HAMAP" id="MF_01342">
    <property type="entry name" value="Ribosomal_uL16"/>
    <property type="match status" value="1"/>
</dbReference>
<dbReference type="InterPro" id="IPR047873">
    <property type="entry name" value="Ribosomal_uL16"/>
</dbReference>
<dbReference type="InterPro" id="IPR000114">
    <property type="entry name" value="Ribosomal_uL16_bact-type"/>
</dbReference>
<dbReference type="InterPro" id="IPR020798">
    <property type="entry name" value="Ribosomal_uL16_CS"/>
</dbReference>
<dbReference type="InterPro" id="IPR016180">
    <property type="entry name" value="Ribosomal_uL16_dom"/>
</dbReference>
<dbReference type="InterPro" id="IPR036920">
    <property type="entry name" value="Ribosomal_uL16_sf"/>
</dbReference>
<dbReference type="NCBIfam" id="TIGR01164">
    <property type="entry name" value="rplP_bact"/>
    <property type="match status" value="1"/>
</dbReference>
<dbReference type="PANTHER" id="PTHR12220">
    <property type="entry name" value="50S/60S RIBOSOMAL PROTEIN L16"/>
    <property type="match status" value="1"/>
</dbReference>
<dbReference type="PANTHER" id="PTHR12220:SF13">
    <property type="entry name" value="LARGE RIBOSOMAL SUBUNIT PROTEIN UL16M"/>
    <property type="match status" value="1"/>
</dbReference>
<dbReference type="Pfam" id="PF00252">
    <property type="entry name" value="Ribosomal_L16"/>
    <property type="match status" value="1"/>
</dbReference>
<dbReference type="PRINTS" id="PR00060">
    <property type="entry name" value="RIBOSOMALL16"/>
</dbReference>
<dbReference type="SUPFAM" id="SSF54686">
    <property type="entry name" value="Ribosomal protein L16p/L10e"/>
    <property type="match status" value="1"/>
</dbReference>
<dbReference type="PROSITE" id="PS00586">
    <property type="entry name" value="RIBOSOMAL_L16_1"/>
    <property type="match status" value="1"/>
</dbReference>
<dbReference type="PROSITE" id="PS00701">
    <property type="entry name" value="RIBOSOMAL_L16_2"/>
    <property type="match status" value="1"/>
</dbReference>
<organism>
    <name type="scientific">Exiguobacterium sibiricum (strain DSM 17290 / CCUG 55495 / CIP 109462 / JCM 13490 / 255-15)</name>
    <dbReference type="NCBI Taxonomy" id="262543"/>
    <lineage>
        <taxon>Bacteria</taxon>
        <taxon>Bacillati</taxon>
        <taxon>Bacillota</taxon>
        <taxon>Bacilli</taxon>
        <taxon>Bacillales</taxon>
        <taxon>Bacillales Family XII. Incertae Sedis</taxon>
        <taxon>Exiguobacterium</taxon>
    </lineage>
</organism>
<reference key="1">
    <citation type="submission" date="2008-04" db="EMBL/GenBank/DDBJ databases">
        <title>Complete sequence of chromosome of Exiguobacterium sibiricum 255-15.</title>
        <authorList>
            <consortium name="US DOE Joint Genome Institute"/>
            <person name="Copeland A."/>
            <person name="Lucas S."/>
            <person name="Lapidus A."/>
            <person name="Glavina del Rio T."/>
            <person name="Dalin E."/>
            <person name="Tice H."/>
            <person name="Bruce D."/>
            <person name="Goodwin L."/>
            <person name="Pitluck S."/>
            <person name="Kiss H."/>
            <person name="Chertkov O."/>
            <person name="Monk C."/>
            <person name="Brettin T."/>
            <person name="Detter J.C."/>
            <person name="Han C."/>
            <person name="Kuske C.R."/>
            <person name="Schmutz J."/>
            <person name="Larimer F."/>
            <person name="Land M."/>
            <person name="Hauser L."/>
            <person name="Kyrpides N."/>
            <person name="Mikhailova N."/>
            <person name="Vishnivetskaya T."/>
            <person name="Rodrigues D.F."/>
            <person name="Gilichinsky D."/>
            <person name="Tiedje J."/>
            <person name="Richardson P."/>
        </authorList>
    </citation>
    <scope>NUCLEOTIDE SEQUENCE [LARGE SCALE GENOMIC DNA]</scope>
    <source>
        <strain>DSM 17290 / CCUG 55495 / CIP 109462 / JCM 13490 / 255-15</strain>
    </source>
</reference>
<proteinExistence type="inferred from homology"/>
<keyword id="KW-1185">Reference proteome</keyword>
<keyword id="KW-0687">Ribonucleoprotein</keyword>
<keyword id="KW-0689">Ribosomal protein</keyword>
<keyword id="KW-0694">RNA-binding</keyword>
<keyword id="KW-0699">rRNA-binding</keyword>
<keyword id="KW-0820">tRNA-binding</keyword>
<comment type="function">
    <text evidence="1">Binds 23S rRNA and is also seen to make contacts with the A and possibly P site tRNAs.</text>
</comment>
<comment type="subunit">
    <text evidence="1">Part of the 50S ribosomal subunit.</text>
</comment>
<comment type="similarity">
    <text evidence="1">Belongs to the universal ribosomal protein uL16 family.</text>
</comment>